<keyword id="KW-0997">Cell inner membrane</keyword>
<keyword id="KW-1003">Cell membrane</keyword>
<keyword id="KW-0472">Membrane</keyword>
<keyword id="KW-1185">Reference proteome</keyword>
<keyword id="KW-0812">Transmembrane</keyword>
<keyword id="KW-1133">Transmembrane helix</keyword>
<name>YGHB_SALTY</name>
<comment type="subcellular location">
    <subcellularLocation>
        <location evidence="1">Cell inner membrane</location>
        <topology evidence="1">Multi-pass membrane protein</topology>
    </subcellularLocation>
</comment>
<comment type="similarity">
    <text evidence="3">Belongs to the DedA family.</text>
</comment>
<organism>
    <name type="scientific">Salmonella typhimurium (strain LT2 / SGSC1412 / ATCC 700720)</name>
    <dbReference type="NCBI Taxonomy" id="99287"/>
    <lineage>
        <taxon>Bacteria</taxon>
        <taxon>Pseudomonadati</taxon>
        <taxon>Pseudomonadota</taxon>
        <taxon>Gammaproteobacteria</taxon>
        <taxon>Enterobacterales</taxon>
        <taxon>Enterobacteriaceae</taxon>
        <taxon>Salmonella</taxon>
    </lineage>
</organism>
<protein>
    <recommendedName>
        <fullName>Inner membrane protein YghB</fullName>
    </recommendedName>
</protein>
<sequence length="219" mass="24153">MAVIQDIIAALWQHDFAALANPHVVSVVYFVMFATLFLENGLLPASFLPGDSLLLLAGALIAQDVMHFLPTIGILTAAASLGCWLSYIQGRWLGNTRTVKGWLAQLPAKYHQRATCMFDRHGLLALLAGRFLAFVRTLLPTMAGISGLSNRRFQFFNWLSGLLWVTVVTSFGYALSMIPFVKRHEDQVMTFLMILPVALLVAGLLGTLVVVIKKKYCNA</sequence>
<proteinExistence type="inferred from homology"/>
<evidence type="ECO:0000250" key="1"/>
<evidence type="ECO:0000255" key="2"/>
<evidence type="ECO:0000305" key="3"/>
<feature type="chain" id="PRO_0000161415" description="Inner membrane protein YghB">
    <location>
        <begin position="1"/>
        <end position="219"/>
    </location>
</feature>
<feature type="topological domain" description="Cytoplasmic" evidence="2">
    <location>
        <begin position="1"/>
        <end position="17"/>
    </location>
</feature>
<feature type="transmembrane region" description="Helical" evidence="2">
    <location>
        <begin position="18"/>
        <end position="38"/>
    </location>
</feature>
<feature type="topological domain" description="Periplasmic" evidence="2">
    <location>
        <begin position="39"/>
        <end position="67"/>
    </location>
</feature>
<feature type="transmembrane region" description="Helical" evidence="2">
    <location>
        <begin position="68"/>
        <end position="88"/>
    </location>
</feature>
<feature type="topological domain" description="Cytoplasmic" evidence="2">
    <location>
        <begin position="89"/>
        <end position="160"/>
    </location>
</feature>
<feature type="transmembrane region" description="Helical" evidence="2">
    <location>
        <begin position="161"/>
        <end position="181"/>
    </location>
</feature>
<feature type="topological domain" description="Periplasmic" evidence="2">
    <location>
        <begin position="182"/>
        <end position="191"/>
    </location>
</feature>
<feature type="transmembrane region" description="Helical" evidence="2">
    <location>
        <begin position="192"/>
        <end position="212"/>
    </location>
</feature>
<feature type="topological domain" description="Cytoplasmic" evidence="2">
    <location>
        <begin position="213"/>
        <end position="219"/>
    </location>
</feature>
<reference key="1">
    <citation type="journal article" date="2001" name="Nature">
        <title>Complete genome sequence of Salmonella enterica serovar Typhimurium LT2.</title>
        <authorList>
            <person name="McClelland M."/>
            <person name="Sanderson K.E."/>
            <person name="Spieth J."/>
            <person name="Clifton S.W."/>
            <person name="Latreille P."/>
            <person name="Courtney L."/>
            <person name="Porwollik S."/>
            <person name="Ali J."/>
            <person name="Dante M."/>
            <person name="Du F."/>
            <person name="Hou S."/>
            <person name="Layman D."/>
            <person name="Leonard S."/>
            <person name="Nguyen C."/>
            <person name="Scott K."/>
            <person name="Holmes A."/>
            <person name="Grewal N."/>
            <person name="Mulvaney E."/>
            <person name="Ryan E."/>
            <person name="Sun H."/>
            <person name="Florea L."/>
            <person name="Miller W."/>
            <person name="Stoneking T."/>
            <person name="Nhan M."/>
            <person name="Waterston R."/>
            <person name="Wilson R.K."/>
        </authorList>
    </citation>
    <scope>NUCLEOTIDE SEQUENCE [LARGE SCALE GENOMIC DNA]</scope>
    <source>
        <strain>LT2 / SGSC1412 / ATCC 700720</strain>
    </source>
</reference>
<reference key="2">
    <citation type="journal article" date="1989" name="Mol. Gen. Genet.">
        <title>DNA sequence of the metC gene and its flanking regions from Salmonella typhimurium LT2 and homology with the corresponding sequence of Escherichia coli.</title>
        <authorList>
            <person name="Park Y.M."/>
            <person name="Stauffer G.V."/>
        </authorList>
    </citation>
    <scope>NUCLEOTIDE SEQUENCE [GENOMIC DNA] OF 1-92</scope>
    <source>
        <strain>LT2</strain>
    </source>
</reference>
<accession>P0A1F4</accession>
<accession>P18951</accession>
<dbReference type="EMBL" id="AE006468">
    <property type="protein sequence ID" value="AAL22036.1"/>
    <property type="molecule type" value="Genomic_DNA"/>
</dbReference>
<dbReference type="PIR" id="PV0007">
    <property type="entry name" value="PV0007"/>
</dbReference>
<dbReference type="RefSeq" id="NP_462077.1">
    <property type="nucleotide sequence ID" value="NC_003197.2"/>
</dbReference>
<dbReference type="RefSeq" id="WP_000268441.1">
    <property type="nucleotide sequence ID" value="NC_003197.2"/>
</dbReference>
<dbReference type="STRING" id="99287.STM3162"/>
<dbReference type="PaxDb" id="99287-STM3162"/>
<dbReference type="GeneID" id="1254685"/>
<dbReference type="KEGG" id="stm:STM3162"/>
<dbReference type="PATRIC" id="fig|99287.12.peg.3351"/>
<dbReference type="HOGENOM" id="CLU_044208_6_2_6"/>
<dbReference type="OMA" id="QGRWLGH"/>
<dbReference type="PhylomeDB" id="P0A1F4"/>
<dbReference type="BioCyc" id="SENT99287:STM3162-MONOMER"/>
<dbReference type="Proteomes" id="UP000001014">
    <property type="component" value="Chromosome"/>
</dbReference>
<dbReference type="GO" id="GO:0005886">
    <property type="term" value="C:plasma membrane"/>
    <property type="evidence" value="ECO:0007669"/>
    <property type="project" value="UniProtKB-SubCell"/>
</dbReference>
<dbReference type="InterPro" id="IPR032818">
    <property type="entry name" value="DedA-like"/>
</dbReference>
<dbReference type="InterPro" id="IPR032816">
    <property type="entry name" value="VTT_dom"/>
</dbReference>
<dbReference type="PANTHER" id="PTHR30353">
    <property type="entry name" value="INNER MEMBRANE PROTEIN DEDA-RELATED"/>
    <property type="match status" value="1"/>
</dbReference>
<dbReference type="PANTHER" id="PTHR30353:SF10">
    <property type="entry name" value="INNER MEMBRANE PROTEIN YGHB"/>
    <property type="match status" value="1"/>
</dbReference>
<dbReference type="Pfam" id="PF09335">
    <property type="entry name" value="VTT_dom"/>
    <property type="match status" value="1"/>
</dbReference>
<gene>
    <name type="primary">yghB</name>
    <name type="ordered locus">STM3162</name>
</gene>